<dbReference type="EC" id="2.7.7.56" evidence="1"/>
<dbReference type="EMBL" id="FM178379">
    <property type="protein sequence ID" value="CAQ77892.1"/>
    <property type="molecule type" value="Genomic_DNA"/>
</dbReference>
<dbReference type="RefSeq" id="WP_012549082.1">
    <property type="nucleotide sequence ID" value="NC_011312.1"/>
</dbReference>
<dbReference type="SMR" id="B6EPI9"/>
<dbReference type="KEGG" id="vsa:VSAL_I0207"/>
<dbReference type="eggNOG" id="COG0689">
    <property type="taxonomic scope" value="Bacteria"/>
</dbReference>
<dbReference type="HOGENOM" id="CLU_050858_0_0_6"/>
<dbReference type="Proteomes" id="UP000001730">
    <property type="component" value="Chromosome 1"/>
</dbReference>
<dbReference type="GO" id="GO:0000175">
    <property type="term" value="F:3'-5'-RNA exonuclease activity"/>
    <property type="evidence" value="ECO:0007669"/>
    <property type="project" value="UniProtKB-UniRule"/>
</dbReference>
<dbReference type="GO" id="GO:0000049">
    <property type="term" value="F:tRNA binding"/>
    <property type="evidence" value="ECO:0007669"/>
    <property type="project" value="UniProtKB-UniRule"/>
</dbReference>
<dbReference type="GO" id="GO:0009022">
    <property type="term" value="F:tRNA nucleotidyltransferase activity"/>
    <property type="evidence" value="ECO:0007669"/>
    <property type="project" value="UniProtKB-UniRule"/>
</dbReference>
<dbReference type="GO" id="GO:0016075">
    <property type="term" value="P:rRNA catabolic process"/>
    <property type="evidence" value="ECO:0007669"/>
    <property type="project" value="UniProtKB-UniRule"/>
</dbReference>
<dbReference type="GO" id="GO:0006364">
    <property type="term" value="P:rRNA processing"/>
    <property type="evidence" value="ECO:0007669"/>
    <property type="project" value="UniProtKB-KW"/>
</dbReference>
<dbReference type="GO" id="GO:0008033">
    <property type="term" value="P:tRNA processing"/>
    <property type="evidence" value="ECO:0007669"/>
    <property type="project" value="UniProtKB-UniRule"/>
</dbReference>
<dbReference type="CDD" id="cd11362">
    <property type="entry name" value="RNase_PH_bact"/>
    <property type="match status" value="1"/>
</dbReference>
<dbReference type="FunFam" id="3.30.230.70:FF:000003">
    <property type="entry name" value="Ribonuclease PH"/>
    <property type="match status" value="1"/>
</dbReference>
<dbReference type="Gene3D" id="3.30.230.70">
    <property type="entry name" value="GHMP Kinase, N-terminal domain"/>
    <property type="match status" value="1"/>
</dbReference>
<dbReference type="HAMAP" id="MF_00564">
    <property type="entry name" value="RNase_PH"/>
    <property type="match status" value="1"/>
</dbReference>
<dbReference type="InterPro" id="IPR001247">
    <property type="entry name" value="ExoRNase_PH_dom1"/>
</dbReference>
<dbReference type="InterPro" id="IPR015847">
    <property type="entry name" value="ExoRNase_PH_dom2"/>
</dbReference>
<dbReference type="InterPro" id="IPR036345">
    <property type="entry name" value="ExoRNase_PH_dom2_sf"/>
</dbReference>
<dbReference type="InterPro" id="IPR027408">
    <property type="entry name" value="PNPase/RNase_PH_dom_sf"/>
</dbReference>
<dbReference type="InterPro" id="IPR020568">
    <property type="entry name" value="Ribosomal_Su5_D2-typ_SF"/>
</dbReference>
<dbReference type="InterPro" id="IPR050080">
    <property type="entry name" value="RNase_PH"/>
</dbReference>
<dbReference type="InterPro" id="IPR002381">
    <property type="entry name" value="RNase_PH_bac-type"/>
</dbReference>
<dbReference type="InterPro" id="IPR018336">
    <property type="entry name" value="RNase_PH_CS"/>
</dbReference>
<dbReference type="NCBIfam" id="TIGR01966">
    <property type="entry name" value="RNasePH"/>
    <property type="match status" value="1"/>
</dbReference>
<dbReference type="PANTHER" id="PTHR11953">
    <property type="entry name" value="EXOSOME COMPLEX COMPONENT"/>
    <property type="match status" value="1"/>
</dbReference>
<dbReference type="PANTHER" id="PTHR11953:SF0">
    <property type="entry name" value="EXOSOME COMPLEX COMPONENT RRP41"/>
    <property type="match status" value="1"/>
</dbReference>
<dbReference type="Pfam" id="PF01138">
    <property type="entry name" value="RNase_PH"/>
    <property type="match status" value="1"/>
</dbReference>
<dbReference type="Pfam" id="PF03725">
    <property type="entry name" value="RNase_PH_C"/>
    <property type="match status" value="1"/>
</dbReference>
<dbReference type="SUPFAM" id="SSF55666">
    <property type="entry name" value="Ribonuclease PH domain 2-like"/>
    <property type="match status" value="1"/>
</dbReference>
<dbReference type="SUPFAM" id="SSF54211">
    <property type="entry name" value="Ribosomal protein S5 domain 2-like"/>
    <property type="match status" value="1"/>
</dbReference>
<dbReference type="PROSITE" id="PS01277">
    <property type="entry name" value="RIBONUCLEASE_PH"/>
    <property type="match status" value="1"/>
</dbReference>
<gene>
    <name evidence="1" type="primary">rph</name>
    <name type="ordered locus">VSAL_I0207</name>
</gene>
<reference key="1">
    <citation type="journal article" date="2008" name="BMC Genomics">
        <title>The genome sequence of the fish pathogen Aliivibrio salmonicida strain LFI1238 shows extensive evidence of gene decay.</title>
        <authorList>
            <person name="Hjerde E."/>
            <person name="Lorentzen M.S."/>
            <person name="Holden M.T."/>
            <person name="Seeger K."/>
            <person name="Paulsen S."/>
            <person name="Bason N."/>
            <person name="Churcher C."/>
            <person name="Harris D."/>
            <person name="Norbertczak H."/>
            <person name="Quail M.A."/>
            <person name="Sanders S."/>
            <person name="Thurston S."/>
            <person name="Parkhill J."/>
            <person name="Willassen N.P."/>
            <person name="Thomson N.R."/>
        </authorList>
    </citation>
    <scope>NUCLEOTIDE SEQUENCE [LARGE SCALE GENOMIC DNA]</scope>
    <source>
        <strain>LFI1238</strain>
    </source>
</reference>
<accession>B6EPI9</accession>
<sequence length="238" mass="25586">MRPSGRTAQQVRPITITRHFTAHAEGSVLVEFGNTKVICTASVEENVPRWLKGKGKGWVTAEYGMLPRATHTRNNREAASGKQGGRTMEIQRLIARSLRAAVDLEALGEQMITVDCDVIQADGGTRTASITGASVALADAINHMIASGKLKKNPMKGHVAAVSVGIYKGEAICDLEYLEDSAADTDMNVVMMEDGKMIEVQGTAEVAPFSHQELLDMLALAQQGINDIIEKQKAALAE</sequence>
<keyword id="KW-0548">Nucleotidyltransferase</keyword>
<keyword id="KW-0694">RNA-binding</keyword>
<keyword id="KW-0698">rRNA processing</keyword>
<keyword id="KW-0808">Transferase</keyword>
<keyword id="KW-0819">tRNA processing</keyword>
<keyword id="KW-0820">tRNA-binding</keyword>
<protein>
    <recommendedName>
        <fullName evidence="1">Ribonuclease PH</fullName>
        <shortName evidence="1">RNase PH</shortName>
        <ecNumber evidence="1">2.7.7.56</ecNumber>
    </recommendedName>
    <alternativeName>
        <fullName evidence="1">tRNA nucleotidyltransferase</fullName>
    </alternativeName>
</protein>
<evidence type="ECO:0000255" key="1">
    <source>
        <dbReference type="HAMAP-Rule" id="MF_00564"/>
    </source>
</evidence>
<organism>
    <name type="scientific">Aliivibrio salmonicida (strain LFI1238)</name>
    <name type="common">Vibrio salmonicida (strain LFI1238)</name>
    <dbReference type="NCBI Taxonomy" id="316275"/>
    <lineage>
        <taxon>Bacteria</taxon>
        <taxon>Pseudomonadati</taxon>
        <taxon>Pseudomonadota</taxon>
        <taxon>Gammaproteobacteria</taxon>
        <taxon>Vibrionales</taxon>
        <taxon>Vibrionaceae</taxon>
        <taxon>Aliivibrio</taxon>
    </lineage>
</organism>
<proteinExistence type="inferred from homology"/>
<feature type="chain" id="PRO_1000129314" description="Ribonuclease PH">
    <location>
        <begin position="1"/>
        <end position="238"/>
    </location>
</feature>
<feature type="binding site" evidence="1">
    <location>
        <position position="86"/>
    </location>
    <ligand>
        <name>phosphate</name>
        <dbReference type="ChEBI" id="CHEBI:43474"/>
        <note>substrate</note>
    </ligand>
</feature>
<feature type="binding site" evidence="1">
    <location>
        <begin position="124"/>
        <end position="126"/>
    </location>
    <ligand>
        <name>phosphate</name>
        <dbReference type="ChEBI" id="CHEBI:43474"/>
        <note>substrate</note>
    </ligand>
</feature>
<name>RNPH_ALISL</name>
<comment type="function">
    <text evidence="1">Phosphorolytic 3'-5' exoribonuclease that plays an important role in tRNA 3'-end maturation. Removes nucleotide residues following the 3'-CCA terminus of tRNAs; can also add nucleotides to the ends of RNA molecules by using nucleoside diphosphates as substrates, but this may not be physiologically important. Probably plays a role in initiation of 16S rRNA degradation (leading to ribosome degradation) during starvation.</text>
</comment>
<comment type="catalytic activity">
    <reaction evidence="1">
        <text>tRNA(n+1) + phosphate = tRNA(n) + a ribonucleoside 5'-diphosphate</text>
        <dbReference type="Rhea" id="RHEA:10628"/>
        <dbReference type="Rhea" id="RHEA-COMP:17343"/>
        <dbReference type="Rhea" id="RHEA-COMP:17344"/>
        <dbReference type="ChEBI" id="CHEBI:43474"/>
        <dbReference type="ChEBI" id="CHEBI:57930"/>
        <dbReference type="ChEBI" id="CHEBI:173114"/>
        <dbReference type="EC" id="2.7.7.56"/>
    </reaction>
</comment>
<comment type="subunit">
    <text evidence="1">Homohexameric ring arranged as a trimer of dimers.</text>
</comment>
<comment type="similarity">
    <text evidence="1">Belongs to the RNase PH family.</text>
</comment>